<accession>B1IEG7</accession>
<name>THIM1_CLOBK</name>
<protein>
    <recommendedName>
        <fullName evidence="1">Hydroxyethylthiazole kinase 1</fullName>
        <ecNumber evidence="1">2.7.1.50</ecNumber>
    </recommendedName>
    <alternativeName>
        <fullName evidence="1">4-methyl-5-beta-hydroxyethylthiazole kinase 1</fullName>
        <shortName evidence="1">TH kinase 1</shortName>
        <shortName evidence="1">Thz kinase 1</shortName>
    </alternativeName>
</protein>
<keyword id="KW-0067">ATP-binding</keyword>
<keyword id="KW-0418">Kinase</keyword>
<keyword id="KW-0460">Magnesium</keyword>
<keyword id="KW-0479">Metal-binding</keyword>
<keyword id="KW-0547">Nucleotide-binding</keyword>
<keyword id="KW-0784">Thiamine biosynthesis</keyword>
<keyword id="KW-0808">Transferase</keyword>
<sequence>MENKNVIQKMREKTPLIHCITNYVTINDCANILLSFGASPAMCEAYDEVYDFVSISSALYINLGTLTKEQETAAVLASISAKNHNVPVVIDPVGCPAIKRKVEVINRIAEVGRIDIIKGNIGEIKFLAGMDSETRGVDSLDNGENALDACTQLAKKYNCIVAATGQKDFVSDGKRGSVIKNGTEMLTKVTGAGCMLGALCAATCANFEDKLVSTTAAILSMNIAGEKAYEKAQLPGSFRIALIDNIYMISDEEIWERGNVEWK</sequence>
<proteinExistence type="inferred from homology"/>
<evidence type="ECO:0000255" key="1">
    <source>
        <dbReference type="HAMAP-Rule" id="MF_00228"/>
    </source>
</evidence>
<gene>
    <name evidence="1" type="primary">thiM1</name>
    <name type="ordered locus">CLD_0292</name>
</gene>
<reference key="1">
    <citation type="journal article" date="2007" name="PLoS ONE">
        <title>Analysis of the neurotoxin complex genes in Clostridium botulinum A1-A4 and B1 strains: BoNT/A3, /Ba4 and /B1 clusters are located within plasmids.</title>
        <authorList>
            <person name="Smith T.J."/>
            <person name="Hill K.K."/>
            <person name="Foley B.T."/>
            <person name="Detter J.C."/>
            <person name="Munk A.C."/>
            <person name="Bruce D.C."/>
            <person name="Doggett N.A."/>
            <person name="Smith L.A."/>
            <person name="Marks J.D."/>
            <person name="Xie G."/>
            <person name="Brettin T.S."/>
        </authorList>
    </citation>
    <scope>NUCLEOTIDE SEQUENCE [LARGE SCALE GENOMIC DNA]</scope>
    <source>
        <strain>Okra / Type B1</strain>
    </source>
</reference>
<dbReference type="EC" id="2.7.1.50" evidence="1"/>
<dbReference type="EMBL" id="CP000939">
    <property type="protein sequence ID" value="ACA44329.1"/>
    <property type="molecule type" value="Genomic_DNA"/>
</dbReference>
<dbReference type="RefSeq" id="WP_003399629.1">
    <property type="nucleotide sequence ID" value="NC_010516.1"/>
</dbReference>
<dbReference type="SMR" id="B1IEG7"/>
<dbReference type="KEGG" id="cbb:CLD_0292"/>
<dbReference type="HOGENOM" id="CLU_019943_0_0_9"/>
<dbReference type="UniPathway" id="UPA00060">
    <property type="reaction ID" value="UER00139"/>
</dbReference>
<dbReference type="Proteomes" id="UP000008541">
    <property type="component" value="Chromosome"/>
</dbReference>
<dbReference type="GO" id="GO:0005524">
    <property type="term" value="F:ATP binding"/>
    <property type="evidence" value="ECO:0007669"/>
    <property type="project" value="UniProtKB-UniRule"/>
</dbReference>
<dbReference type="GO" id="GO:0004417">
    <property type="term" value="F:hydroxyethylthiazole kinase activity"/>
    <property type="evidence" value="ECO:0007669"/>
    <property type="project" value="UniProtKB-UniRule"/>
</dbReference>
<dbReference type="GO" id="GO:0000287">
    <property type="term" value="F:magnesium ion binding"/>
    <property type="evidence" value="ECO:0007669"/>
    <property type="project" value="UniProtKB-UniRule"/>
</dbReference>
<dbReference type="GO" id="GO:0009228">
    <property type="term" value="P:thiamine biosynthetic process"/>
    <property type="evidence" value="ECO:0007669"/>
    <property type="project" value="UniProtKB-KW"/>
</dbReference>
<dbReference type="GO" id="GO:0009229">
    <property type="term" value="P:thiamine diphosphate biosynthetic process"/>
    <property type="evidence" value="ECO:0007669"/>
    <property type="project" value="UniProtKB-UniRule"/>
</dbReference>
<dbReference type="CDD" id="cd01170">
    <property type="entry name" value="THZ_kinase"/>
    <property type="match status" value="1"/>
</dbReference>
<dbReference type="Gene3D" id="3.40.1190.20">
    <property type="match status" value="1"/>
</dbReference>
<dbReference type="HAMAP" id="MF_00228">
    <property type="entry name" value="Thz_kinase"/>
    <property type="match status" value="1"/>
</dbReference>
<dbReference type="InterPro" id="IPR000417">
    <property type="entry name" value="Hyethyz_kinase"/>
</dbReference>
<dbReference type="InterPro" id="IPR029056">
    <property type="entry name" value="Ribokinase-like"/>
</dbReference>
<dbReference type="NCBIfam" id="NF006830">
    <property type="entry name" value="PRK09355.1"/>
    <property type="match status" value="1"/>
</dbReference>
<dbReference type="NCBIfam" id="TIGR00694">
    <property type="entry name" value="thiM"/>
    <property type="match status" value="1"/>
</dbReference>
<dbReference type="Pfam" id="PF02110">
    <property type="entry name" value="HK"/>
    <property type="match status" value="1"/>
</dbReference>
<dbReference type="PIRSF" id="PIRSF000513">
    <property type="entry name" value="Thz_kinase"/>
    <property type="match status" value="1"/>
</dbReference>
<dbReference type="PRINTS" id="PR01099">
    <property type="entry name" value="HYETHTZKNASE"/>
</dbReference>
<dbReference type="SUPFAM" id="SSF53613">
    <property type="entry name" value="Ribokinase-like"/>
    <property type="match status" value="1"/>
</dbReference>
<comment type="function">
    <text evidence="1">Catalyzes the phosphorylation of the hydroxyl group of 4-methyl-5-beta-hydroxyethylthiazole (THZ).</text>
</comment>
<comment type="catalytic activity">
    <reaction evidence="1">
        <text>5-(2-hydroxyethyl)-4-methylthiazole + ATP = 4-methyl-5-(2-phosphooxyethyl)-thiazole + ADP + H(+)</text>
        <dbReference type="Rhea" id="RHEA:24212"/>
        <dbReference type="ChEBI" id="CHEBI:15378"/>
        <dbReference type="ChEBI" id="CHEBI:17957"/>
        <dbReference type="ChEBI" id="CHEBI:30616"/>
        <dbReference type="ChEBI" id="CHEBI:58296"/>
        <dbReference type="ChEBI" id="CHEBI:456216"/>
        <dbReference type="EC" id="2.7.1.50"/>
    </reaction>
</comment>
<comment type="cofactor">
    <cofactor evidence="1">
        <name>Mg(2+)</name>
        <dbReference type="ChEBI" id="CHEBI:18420"/>
    </cofactor>
</comment>
<comment type="pathway">
    <text evidence="1">Cofactor biosynthesis; thiamine diphosphate biosynthesis; 4-methyl-5-(2-phosphoethyl)-thiazole from 5-(2-hydroxyethyl)-4-methylthiazole: step 1/1.</text>
</comment>
<comment type="similarity">
    <text evidence="1">Belongs to the Thz kinase family.</text>
</comment>
<feature type="chain" id="PRO_1000100410" description="Hydroxyethylthiazole kinase 1">
    <location>
        <begin position="1"/>
        <end position="263"/>
    </location>
</feature>
<feature type="binding site" evidence="1">
    <location>
        <position position="42"/>
    </location>
    <ligand>
        <name>substrate</name>
    </ligand>
</feature>
<feature type="binding site" evidence="1">
    <location>
        <position position="118"/>
    </location>
    <ligand>
        <name>ATP</name>
        <dbReference type="ChEBI" id="CHEBI:30616"/>
    </ligand>
</feature>
<feature type="binding site" evidence="1">
    <location>
        <position position="164"/>
    </location>
    <ligand>
        <name>ATP</name>
        <dbReference type="ChEBI" id="CHEBI:30616"/>
    </ligand>
</feature>
<feature type="binding site" evidence="1">
    <location>
        <position position="191"/>
    </location>
    <ligand>
        <name>substrate</name>
    </ligand>
</feature>
<organism>
    <name type="scientific">Clostridium botulinum (strain Okra / Type B1)</name>
    <dbReference type="NCBI Taxonomy" id="498213"/>
    <lineage>
        <taxon>Bacteria</taxon>
        <taxon>Bacillati</taxon>
        <taxon>Bacillota</taxon>
        <taxon>Clostridia</taxon>
        <taxon>Eubacteriales</taxon>
        <taxon>Clostridiaceae</taxon>
        <taxon>Clostridium</taxon>
    </lineage>
</organism>